<protein>
    <recommendedName>
        <fullName>Endochitinase</fullName>
        <ecNumber>3.2.1.14</ecNumber>
    </recommendedName>
</protein>
<name>CHIT_SOLTU</name>
<comment type="function">
    <text>Defense against chitin-containing fungal pathogens.</text>
</comment>
<comment type="catalytic activity">
    <reaction>
        <text>Random endo-hydrolysis of N-acetyl-beta-D-glucosaminide (1-&gt;4)-beta-linkages in chitin and chitodextrins.</text>
        <dbReference type="EC" id="3.2.1.14"/>
    </reaction>
</comment>
<comment type="subcellular location">
    <subcellularLocation>
        <location evidence="1">Vacuole</location>
    </subcellularLocation>
    <text evidence="1">Vacuolar and protoplast.</text>
</comment>
<comment type="induction">
    <text>By ethylene.</text>
</comment>
<comment type="similarity">
    <text evidence="4">Belongs to the glycosyl hydrolase 19 family. Chitinase class I subfamily.</text>
</comment>
<proteinExistence type="evidence at transcript level"/>
<reference key="1">
    <citation type="journal article" date="1988" name="Nucleic Acids Res.">
        <title>Primary structure of an endochitinase mRNA from Solanum tuberosum.</title>
        <authorList>
            <person name="Gaynor J.J."/>
        </authorList>
    </citation>
    <scope>NUCLEOTIDE SEQUENCE [MRNA]</scope>
    <source>
        <strain>cv. Russet Burbank-0</strain>
        <tissue>Leaf</tissue>
    </source>
</reference>
<reference key="2">
    <citation type="journal article" date="1989" name="Nucleic Acids Res.">
        <title>Sequence analysis of a genomic clone encoding an endochitinase from Solanum tuberosum.</title>
        <authorList>
            <person name="Gaynor J.J."/>
            <person name="Unkenholz K.M."/>
        </authorList>
    </citation>
    <scope>NUCLEOTIDE SEQUENCE [GENOMIC DNA]</scope>
    <source>
        <strain>cv. Russet Burbank-0</strain>
    </source>
</reference>
<evidence type="ECO:0000250" key="1"/>
<evidence type="ECO:0000250" key="2">
    <source>
        <dbReference type="UniProtKB" id="P29022"/>
    </source>
</evidence>
<evidence type="ECO:0000255" key="3">
    <source>
        <dbReference type="PROSITE-ProRule" id="PRU00261"/>
    </source>
</evidence>
<evidence type="ECO:0000305" key="4"/>
<organism>
    <name type="scientific">Solanum tuberosum</name>
    <name type="common">Potato</name>
    <dbReference type="NCBI Taxonomy" id="4113"/>
    <lineage>
        <taxon>Eukaryota</taxon>
        <taxon>Viridiplantae</taxon>
        <taxon>Streptophyta</taxon>
        <taxon>Embryophyta</taxon>
        <taxon>Tracheophyta</taxon>
        <taxon>Spermatophyta</taxon>
        <taxon>Magnoliopsida</taxon>
        <taxon>eudicotyledons</taxon>
        <taxon>Gunneridae</taxon>
        <taxon>Pentapetalae</taxon>
        <taxon>asterids</taxon>
        <taxon>lamiids</taxon>
        <taxon>Solanales</taxon>
        <taxon>Solanaceae</taxon>
        <taxon>Solanoideae</taxon>
        <taxon>Solaneae</taxon>
        <taxon>Solanum</taxon>
    </lineage>
</organism>
<dbReference type="EC" id="3.2.1.14"/>
<dbReference type="EMBL" id="X07130">
    <property type="protein sequence ID" value="CAA30142.1"/>
    <property type="molecule type" value="mRNA"/>
</dbReference>
<dbReference type="EMBL" id="X15494">
    <property type="protein sequence ID" value="CAA33517.1"/>
    <property type="molecule type" value="Genomic_DNA"/>
</dbReference>
<dbReference type="PIR" id="S05426">
    <property type="entry name" value="S05426"/>
</dbReference>
<dbReference type="SMR" id="P05315"/>
<dbReference type="FunCoup" id="P05315">
    <property type="interactions" value="211"/>
</dbReference>
<dbReference type="STRING" id="4113.P05315"/>
<dbReference type="CAZy" id="CBM18">
    <property type="family name" value="Carbohydrate-Binding Module Family 18"/>
</dbReference>
<dbReference type="CAZy" id="GH19">
    <property type="family name" value="Glycoside Hydrolase Family 19"/>
</dbReference>
<dbReference type="InParanoid" id="P05315"/>
<dbReference type="Proteomes" id="UP000011115">
    <property type="component" value="Unassembled WGS sequence"/>
</dbReference>
<dbReference type="ExpressionAtlas" id="P05315">
    <property type="expression patterns" value="baseline"/>
</dbReference>
<dbReference type="GO" id="GO:0005773">
    <property type="term" value="C:vacuole"/>
    <property type="evidence" value="ECO:0007669"/>
    <property type="project" value="UniProtKB-SubCell"/>
</dbReference>
<dbReference type="GO" id="GO:0008061">
    <property type="term" value="F:chitin binding"/>
    <property type="evidence" value="ECO:0007669"/>
    <property type="project" value="UniProtKB-KW"/>
</dbReference>
<dbReference type="GO" id="GO:0004568">
    <property type="term" value="F:chitinase activity"/>
    <property type="evidence" value="ECO:0000318"/>
    <property type="project" value="GO_Central"/>
</dbReference>
<dbReference type="GO" id="GO:0008843">
    <property type="term" value="F:endochitinase activity"/>
    <property type="evidence" value="ECO:0007669"/>
    <property type="project" value="UniProtKB-EC"/>
</dbReference>
<dbReference type="GO" id="GO:0016998">
    <property type="term" value="P:cell wall macromolecule catabolic process"/>
    <property type="evidence" value="ECO:0007669"/>
    <property type="project" value="InterPro"/>
</dbReference>
<dbReference type="GO" id="GO:0006032">
    <property type="term" value="P:chitin catabolic process"/>
    <property type="evidence" value="ECO:0007669"/>
    <property type="project" value="UniProtKB-KW"/>
</dbReference>
<dbReference type="GO" id="GO:0006952">
    <property type="term" value="P:defense response"/>
    <property type="evidence" value="ECO:0007669"/>
    <property type="project" value="UniProtKB-KW"/>
</dbReference>
<dbReference type="GO" id="GO:0000272">
    <property type="term" value="P:polysaccharide catabolic process"/>
    <property type="evidence" value="ECO:0007669"/>
    <property type="project" value="UniProtKB-KW"/>
</dbReference>
<dbReference type="CDD" id="cd00325">
    <property type="entry name" value="chitinase_GH19"/>
    <property type="match status" value="1"/>
</dbReference>
<dbReference type="CDD" id="cd00035">
    <property type="entry name" value="ChtBD1"/>
    <property type="match status" value="1"/>
</dbReference>
<dbReference type="FunFam" id="3.30.20.10:FF:000001">
    <property type="entry name" value="Endochitinase (Chitinase)"/>
    <property type="match status" value="1"/>
</dbReference>
<dbReference type="Gene3D" id="1.10.530.10">
    <property type="match status" value="1"/>
</dbReference>
<dbReference type="Gene3D" id="3.30.20.10">
    <property type="entry name" value="Endochitinase, domain 2"/>
    <property type="match status" value="1"/>
</dbReference>
<dbReference type="Gene3D" id="3.30.60.10">
    <property type="entry name" value="Endochitinase-like"/>
    <property type="match status" value="1"/>
</dbReference>
<dbReference type="InterPro" id="IPR001002">
    <property type="entry name" value="Chitin-bd_1"/>
</dbReference>
<dbReference type="InterPro" id="IPR018371">
    <property type="entry name" value="Chitin-binding_1_CS"/>
</dbReference>
<dbReference type="InterPro" id="IPR036861">
    <property type="entry name" value="Endochitinase-like_sf"/>
</dbReference>
<dbReference type="InterPro" id="IPR016283">
    <property type="entry name" value="Glyco_hydro_19"/>
</dbReference>
<dbReference type="InterPro" id="IPR000726">
    <property type="entry name" value="Glyco_hydro_19_cat"/>
</dbReference>
<dbReference type="InterPro" id="IPR023346">
    <property type="entry name" value="Lysozyme-like_dom_sf"/>
</dbReference>
<dbReference type="PANTHER" id="PTHR22595">
    <property type="entry name" value="CHITINASE-RELATED"/>
    <property type="match status" value="1"/>
</dbReference>
<dbReference type="PANTHER" id="PTHR22595:SF166">
    <property type="entry name" value="ENDOCHITINASE"/>
    <property type="match status" value="1"/>
</dbReference>
<dbReference type="Pfam" id="PF00187">
    <property type="entry name" value="Chitin_bind_1"/>
    <property type="match status" value="1"/>
</dbReference>
<dbReference type="Pfam" id="PF00182">
    <property type="entry name" value="Glyco_hydro_19"/>
    <property type="match status" value="1"/>
</dbReference>
<dbReference type="PIRSF" id="PIRSF001060">
    <property type="entry name" value="Endochitinase"/>
    <property type="match status" value="1"/>
</dbReference>
<dbReference type="PRINTS" id="PR00451">
    <property type="entry name" value="CHITINBINDNG"/>
</dbReference>
<dbReference type="SMART" id="SM00270">
    <property type="entry name" value="ChtBD1"/>
    <property type="match status" value="1"/>
</dbReference>
<dbReference type="SUPFAM" id="SSF53955">
    <property type="entry name" value="Lysozyme-like"/>
    <property type="match status" value="1"/>
</dbReference>
<dbReference type="SUPFAM" id="SSF57016">
    <property type="entry name" value="Plant lectins/antimicrobial peptides"/>
    <property type="match status" value="1"/>
</dbReference>
<dbReference type="PROSITE" id="PS00026">
    <property type="entry name" value="CHIT_BIND_I_1"/>
    <property type="match status" value="1"/>
</dbReference>
<dbReference type="PROSITE" id="PS50941">
    <property type="entry name" value="CHIT_BIND_I_2"/>
    <property type="match status" value="1"/>
</dbReference>
<dbReference type="PROSITE" id="PS00773">
    <property type="entry name" value="CHITINASE_19_1"/>
    <property type="match status" value="1"/>
</dbReference>
<dbReference type="PROSITE" id="PS00774">
    <property type="entry name" value="CHITINASE_19_2"/>
    <property type="match status" value="1"/>
</dbReference>
<keyword id="KW-0119">Carbohydrate metabolism</keyword>
<keyword id="KW-0146">Chitin degradation</keyword>
<keyword id="KW-0147">Chitin-binding</keyword>
<keyword id="KW-1015">Disulfide bond</keyword>
<keyword id="KW-0326">Glycosidase</keyword>
<keyword id="KW-0378">Hydrolase</keyword>
<keyword id="KW-0611">Plant defense</keyword>
<keyword id="KW-0624">Polysaccharide degradation</keyword>
<keyword id="KW-1185">Reference proteome</keyword>
<keyword id="KW-0732">Signal</keyword>
<keyword id="KW-0926">Vacuole</keyword>
<sequence>MRRHKEVNFVAYLLFSLLVLVSAALAQNCGSQGGGKACASGQCCSKFGWCGNTNDYCGSGNCQSQCPGGGPGPGPGGDLGSAISNSMFDQMLKHRNENSCQGKNFYSYNAFINAARSFPGFGTSGDINARKREIAAFFAQTSHETTGGWASAPDGPYAWGYCFLRERGNPGDYCPPSSQWPCAPGRKYFGRGPIQISHNYNYGPCGRAIGVDLLNNPDLVATDPVISFKTALWFWMTPQSPKPSCHDVIIGRWNPSSADRAANRLPGFGVITNIINGGLECGRGTDNRVQDRIGFYRRYCSILGVTPGDNLDCVNQRWFGNALLVDTL</sequence>
<accession>P05315</accession>
<feature type="signal peptide">
    <location>
        <begin position="1"/>
        <end position="26"/>
    </location>
</feature>
<feature type="chain" id="PRO_0000005327" description="Endochitinase">
    <location>
        <begin position="27"/>
        <end position="321"/>
    </location>
</feature>
<feature type="propeptide" id="PRO_0000005328" description="Removed in mature form" evidence="4">
    <location>
        <begin position="322"/>
        <end position="328"/>
    </location>
</feature>
<feature type="domain" description="Chitin-binding type-1" evidence="3">
    <location>
        <begin position="27"/>
        <end position="68"/>
    </location>
</feature>
<feature type="active site" description="Proton donor" evidence="2">
    <location>
        <position position="144"/>
    </location>
</feature>
<feature type="disulfide bond" evidence="3">
    <location>
        <begin position="29"/>
        <end position="44"/>
    </location>
</feature>
<feature type="disulfide bond" evidence="3">
    <location>
        <begin position="38"/>
        <end position="50"/>
    </location>
</feature>
<feature type="disulfide bond" evidence="3">
    <location>
        <begin position="43"/>
        <end position="57"/>
    </location>
</feature>
<feature type="disulfide bond" evidence="3">
    <location>
        <begin position="62"/>
        <end position="66"/>
    </location>
</feature>
<feature type="disulfide bond" evidence="3">
    <location>
        <begin position="100"/>
        <end position="162"/>
    </location>
</feature>
<feature type="disulfide bond" evidence="3">
    <location>
        <begin position="174"/>
        <end position="182"/>
    </location>
</feature>
<feature type="disulfide bond" evidence="3">
    <location>
        <begin position="281"/>
        <end position="313"/>
    </location>
</feature>